<keyword id="KW-0067">ATP-binding</keyword>
<keyword id="KW-0238">DNA-binding</keyword>
<keyword id="KW-0479">Metal-binding</keyword>
<keyword id="KW-0547">Nucleotide-binding</keyword>
<keyword id="KW-0678">Repressor</keyword>
<keyword id="KW-0804">Transcription</keyword>
<keyword id="KW-0805">Transcription regulation</keyword>
<keyword id="KW-0862">Zinc</keyword>
<keyword id="KW-0863">Zinc-finger</keyword>
<sequence>MHCPFCFAVDTKVIDSRLVGEGSSVRRRRQCLVCNERFTTFEVAELVMPRVVKSNDVREPFNEDKLRSGMLKALEKRPVSADDVEMAVNHIKTHLRGTGEREVASKMIGNLVMEQLKKLDKVAYIRFASVYRSFEDIKEFGEEIARLQD</sequence>
<protein>
    <recommendedName>
        <fullName evidence="1">Transcriptional repressor NrdR</fullName>
    </recommendedName>
</protein>
<comment type="function">
    <text evidence="1">Negatively regulates transcription of bacterial ribonucleotide reductase nrd genes and operons by binding to NrdR-boxes.</text>
</comment>
<comment type="cofactor">
    <cofactor evidence="1">
        <name>Zn(2+)</name>
        <dbReference type="ChEBI" id="CHEBI:29105"/>
    </cofactor>
    <text evidence="1">Binds 1 zinc ion.</text>
</comment>
<comment type="similarity">
    <text evidence="1">Belongs to the NrdR family.</text>
</comment>
<organism>
    <name type="scientific">Klebsiella pneumoniae (strain 342)</name>
    <dbReference type="NCBI Taxonomy" id="507522"/>
    <lineage>
        <taxon>Bacteria</taxon>
        <taxon>Pseudomonadati</taxon>
        <taxon>Pseudomonadota</taxon>
        <taxon>Gammaproteobacteria</taxon>
        <taxon>Enterobacterales</taxon>
        <taxon>Enterobacteriaceae</taxon>
        <taxon>Klebsiella/Raoultella group</taxon>
        <taxon>Klebsiella</taxon>
        <taxon>Klebsiella pneumoniae complex</taxon>
    </lineage>
</organism>
<name>NRDR_KLEP3</name>
<gene>
    <name evidence="1" type="primary">nrdR</name>
    <name type="ordered locus">KPK_4319</name>
</gene>
<reference key="1">
    <citation type="journal article" date="2008" name="PLoS Genet.">
        <title>Complete genome sequence of the N2-fixing broad host range endophyte Klebsiella pneumoniae 342 and virulence predictions verified in mice.</title>
        <authorList>
            <person name="Fouts D.E."/>
            <person name="Tyler H.L."/>
            <person name="DeBoy R.T."/>
            <person name="Daugherty S."/>
            <person name="Ren Q."/>
            <person name="Badger J.H."/>
            <person name="Durkin A.S."/>
            <person name="Huot H."/>
            <person name="Shrivastava S."/>
            <person name="Kothari S."/>
            <person name="Dodson R.J."/>
            <person name="Mohamoud Y."/>
            <person name="Khouri H."/>
            <person name="Roesch L.F.W."/>
            <person name="Krogfelt K.A."/>
            <person name="Struve C."/>
            <person name="Triplett E.W."/>
            <person name="Methe B.A."/>
        </authorList>
    </citation>
    <scope>NUCLEOTIDE SEQUENCE [LARGE SCALE GENOMIC DNA]</scope>
    <source>
        <strain>342</strain>
    </source>
</reference>
<accession>B5Y0X8</accession>
<dbReference type="EMBL" id="CP000964">
    <property type="protein sequence ID" value="ACI09277.1"/>
    <property type="molecule type" value="Genomic_DNA"/>
</dbReference>
<dbReference type="SMR" id="B5Y0X8"/>
<dbReference type="KEGG" id="kpe:KPK_4319"/>
<dbReference type="HOGENOM" id="CLU_108412_0_0_6"/>
<dbReference type="Proteomes" id="UP000001734">
    <property type="component" value="Chromosome"/>
</dbReference>
<dbReference type="GO" id="GO:0005524">
    <property type="term" value="F:ATP binding"/>
    <property type="evidence" value="ECO:0007669"/>
    <property type="project" value="UniProtKB-KW"/>
</dbReference>
<dbReference type="GO" id="GO:0003677">
    <property type="term" value="F:DNA binding"/>
    <property type="evidence" value="ECO:0007669"/>
    <property type="project" value="UniProtKB-KW"/>
</dbReference>
<dbReference type="GO" id="GO:0008270">
    <property type="term" value="F:zinc ion binding"/>
    <property type="evidence" value="ECO:0007669"/>
    <property type="project" value="UniProtKB-UniRule"/>
</dbReference>
<dbReference type="GO" id="GO:0045892">
    <property type="term" value="P:negative regulation of DNA-templated transcription"/>
    <property type="evidence" value="ECO:0007669"/>
    <property type="project" value="UniProtKB-UniRule"/>
</dbReference>
<dbReference type="HAMAP" id="MF_00440">
    <property type="entry name" value="NrdR"/>
    <property type="match status" value="1"/>
</dbReference>
<dbReference type="InterPro" id="IPR005144">
    <property type="entry name" value="ATP-cone_dom"/>
</dbReference>
<dbReference type="InterPro" id="IPR055173">
    <property type="entry name" value="NrdR-like_N"/>
</dbReference>
<dbReference type="InterPro" id="IPR003796">
    <property type="entry name" value="RNR_NrdR-like"/>
</dbReference>
<dbReference type="NCBIfam" id="TIGR00244">
    <property type="entry name" value="transcriptional regulator NrdR"/>
    <property type="match status" value="1"/>
</dbReference>
<dbReference type="PANTHER" id="PTHR30455">
    <property type="entry name" value="TRANSCRIPTIONAL REPRESSOR NRDR"/>
    <property type="match status" value="1"/>
</dbReference>
<dbReference type="PANTHER" id="PTHR30455:SF2">
    <property type="entry name" value="TRANSCRIPTIONAL REPRESSOR NRDR"/>
    <property type="match status" value="1"/>
</dbReference>
<dbReference type="Pfam" id="PF03477">
    <property type="entry name" value="ATP-cone"/>
    <property type="match status" value="1"/>
</dbReference>
<dbReference type="Pfam" id="PF22811">
    <property type="entry name" value="Zn_ribbon_NrdR"/>
    <property type="match status" value="1"/>
</dbReference>
<dbReference type="PROSITE" id="PS51161">
    <property type="entry name" value="ATP_CONE"/>
    <property type="match status" value="1"/>
</dbReference>
<evidence type="ECO:0000255" key="1">
    <source>
        <dbReference type="HAMAP-Rule" id="MF_00440"/>
    </source>
</evidence>
<feature type="chain" id="PRO_1000124515" description="Transcriptional repressor NrdR">
    <location>
        <begin position="1"/>
        <end position="149"/>
    </location>
</feature>
<feature type="domain" description="ATP-cone" evidence="1">
    <location>
        <begin position="49"/>
        <end position="139"/>
    </location>
</feature>
<feature type="zinc finger region" evidence="1">
    <location>
        <begin position="3"/>
        <end position="34"/>
    </location>
</feature>
<proteinExistence type="inferred from homology"/>